<comment type="catalytic activity">
    <reaction evidence="1">
        <text>CMP + ATP = CDP + ADP</text>
        <dbReference type="Rhea" id="RHEA:11600"/>
        <dbReference type="ChEBI" id="CHEBI:30616"/>
        <dbReference type="ChEBI" id="CHEBI:58069"/>
        <dbReference type="ChEBI" id="CHEBI:60377"/>
        <dbReference type="ChEBI" id="CHEBI:456216"/>
        <dbReference type="EC" id="2.7.4.25"/>
    </reaction>
</comment>
<comment type="catalytic activity">
    <reaction evidence="1">
        <text>dCMP + ATP = dCDP + ADP</text>
        <dbReference type="Rhea" id="RHEA:25094"/>
        <dbReference type="ChEBI" id="CHEBI:30616"/>
        <dbReference type="ChEBI" id="CHEBI:57566"/>
        <dbReference type="ChEBI" id="CHEBI:58593"/>
        <dbReference type="ChEBI" id="CHEBI:456216"/>
        <dbReference type="EC" id="2.7.4.25"/>
    </reaction>
</comment>
<comment type="subcellular location">
    <subcellularLocation>
        <location evidence="1">Cytoplasm</location>
    </subcellularLocation>
</comment>
<comment type="similarity">
    <text evidence="1">Belongs to the cytidylate kinase family. Type 1 subfamily.</text>
</comment>
<reference key="1">
    <citation type="journal article" date="2002" name="Proc. Natl. Acad. Sci. U.S.A.">
        <title>Genome sequence of Streptococcus mutans UA159, a cariogenic dental pathogen.</title>
        <authorList>
            <person name="Ajdic D.J."/>
            <person name="McShan W.M."/>
            <person name="McLaughlin R.E."/>
            <person name="Savic G."/>
            <person name="Chang J."/>
            <person name="Carson M.B."/>
            <person name="Primeaux C."/>
            <person name="Tian R."/>
            <person name="Kenton S."/>
            <person name="Jia H.G."/>
            <person name="Lin S.P."/>
            <person name="Qian Y."/>
            <person name="Li S."/>
            <person name="Zhu H."/>
            <person name="Najar F.Z."/>
            <person name="Lai H."/>
            <person name="White J."/>
            <person name="Roe B.A."/>
            <person name="Ferretti J.J."/>
        </authorList>
    </citation>
    <scope>NUCLEOTIDE SEQUENCE [LARGE SCALE GENOMIC DNA]</scope>
    <source>
        <strain>ATCC 700610 / UA159</strain>
    </source>
</reference>
<organism>
    <name type="scientific">Streptococcus mutans serotype c (strain ATCC 700610 / UA159)</name>
    <dbReference type="NCBI Taxonomy" id="210007"/>
    <lineage>
        <taxon>Bacteria</taxon>
        <taxon>Bacillati</taxon>
        <taxon>Bacillota</taxon>
        <taxon>Bacilli</taxon>
        <taxon>Lactobacillales</taxon>
        <taxon>Streptococcaceae</taxon>
        <taxon>Streptococcus</taxon>
    </lineage>
</organism>
<protein>
    <recommendedName>
        <fullName evidence="1">Cytidylate kinase</fullName>
        <shortName evidence="1">CK</shortName>
        <ecNumber evidence="1">2.7.4.25</ecNumber>
    </recommendedName>
    <alternativeName>
        <fullName evidence="1">Cytidine monophosphate kinase</fullName>
        <shortName evidence="1">CMP kinase</shortName>
    </alternativeName>
</protein>
<accession>Q8DV23</accession>
<sequence length="227" mass="25210">MMGIRIAIDGPASSGKSTVAKIIAKKLGYVYLDTGAMYRSATYLALQNDTDLTDERAIVKLLKDYPISFGRRKDDSEQLVFVGNVEVSHPIRENEVTNNVSTVAALPLVRKTLVDLQQQLAKKGGIVMDGRDIGTVVLPDAELKIFLIASVEERAERRYRENLEKGIQTDFNTLKKEIAERDYKDSHRKISPLKPAADAITFDTTGIDIAGVVNFIEKKAQNIIDRS</sequence>
<feature type="chain" id="PRO_0000131984" description="Cytidylate kinase">
    <location>
        <begin position="1"/>
        <end position="227"/>
    </location>
</feature>
<feature type="binding site" evidence="1">
    <location>
        <begin position="10"/>
        <end position="18"/>
    </location>
    <ligand>
        <name>ATP</name>
        <dbReference type="ChEBI" id="CHEBI:30616"/>
    </ligand>
</feature>
<name>KCY_STRMU</name>
<proteinExistence type="inferred from homology"/>
<keyword id="KW-0067">ATP-binding</keyword>
<keyword id="KW-0963">Cytoplasm</keyword>
<keyword id="KW-0418">Kinase</keyword>
<keyword id="KW-0547">Nucleotide-binding</keyword>
<keyword id="KW-1185">Reference proteome</keyword>
<keyword id="KW-0808">Transferase</keyword>
<gene>
    <name evidence="1" type="primary">cmk</name>
    <name type="ordered locus">SMU_696</name>
</gene>
<evidence type="ECO:0000255" key="1">
    <source>
        <dbReference type="HAMAP-Rule" id="MF_00238"/>
    </source>
</evidence>
<dbReference type="EC" id="2.7.4.25" evidence="1"/>
<dbReference type="EMBL" id="AE014133">
    <property type="protein sequence ID" value="AAN58428.1"/>
    <property type="molecule type" value="Genomic_DNA"/>
</dbReference>
<dbReference type="RefSeq" id="NP_721122.1">
    <property type="nucleotide sequence ID" value="NC_004350.2"/>
</dbReference>
<dbReference type="RefSeq" id="WP_011074539.1">
    <property type="nucleotide sequence ID" value="NC_004350.2"/>
</dbReference>
<dbReference type="SMR" id="Q8DV23"/>
<dbReference type="STRING" id="210007.SMU_696"/>
<dbReference type="GeneID" id="93859751"/>
<dbReference type="KEGG" id="smu:SMU_696"/>
<dbReference type="PATRIC" id="fig|210007.7.peg.618"/>
<dbReference type="eggNOG" id="COG0283">
    <property type="taxonomic scope" value="Bacteria"/>
</dbReference>
<dbReference type="HOGENOM" id="CLU_079959_0_2_9"/>
<dbReference type="OrthoDB" id="9807434at2"/>
<dbReference type="PhylomeDB" id="Q8DV23"/>
<dbReference type="Proteomes" id="UP000002512">
    <property type="component" value="Chromosome"/>
</dbReference>
<dbReference type="GO" id="GO:0005829">
    <property type="term" value="C:cytosol"/>
    <property type="evidence" value="ECO:0007669"/>
    <property type="project" value="TreeGrafter"/>
</dbReference>
<dbReference type="GO" id="GO:0005524">
    <property type="term" value="F:ATP binding"/>
    <property type="evidence" value="ECO:0007669"/>
    <property type="project" value="UniProtKB-UniRule"/>
</dbReference>
<dbReference type="GO" id="GO:0036430">
    <property type="term" value="F:CMP kinase activity"/>
    <property type="evidence" value="ECO:0007669"/>
    <property type="project" value="RHEA"/>
</dbReference>
<dbReference type="GO" id="GO:0036431">
    <property type="term" value="F:dCMP kinase activity"/>
    <property type="evidence" value="ECO:0007669"/>
    <property type="project" value="RHEA"/>
</dbReference>
<dbReference type="GO" id="GO:0015949">
    <property type="term" value="P:nucleobase-containing small molecule interconversion"/>
    <property type="evidence" value="ECO:0007669"/>
    <property type="project" value="TreeGrafter"/>
</dbReference>
<dbReference type="GO" id="GO:0006220">
    <property type="term" value="P:pyrimidine nucleotide metabolic process"/>
    <property type="evidence" value="ECO:0007669"/>
    <property type="project" value="UniProtKB-UniRule"/>
</dbReference>
<dbReference type="CDD" id="cd02020">
    <property type="entry name" value="CMPK"/>
    <property type="match status" value="1"/>
</dbReference>
<dbReference type="FunFam" id="3.40.50.300:FF:000484">
    <property type="entry name" value="Cytidylate kinase"/>
    <property type="match status" value="1"/>
</dbReference>
<dbReference type="Gene3D" id="3.40.50.300">
    <property type="entry name" value="P-loop containing nucleotide triphosphate hydrolases"/>
    <property type="match status" value="1"/>
</dbReference>
<dbReference type="HAMAP" id="MF_00238">
    <property type="entry name" value="Cytidyl_kinase_type1"/>
    <property type="match status" value="1"/>
</dbReference>
<dbReference type="InterPro" id="IPR003136">
    <property type="entry name" value="Cytidylate_kin"/>
</dbReference>
<dbReference type="InterPro" id="IPR011994">
    <property type="entry name" value="Cytidylate_kinase_dom"/>
</dbReference>
<dbReference type="InterPro" id="IPR027417">
    <property type="entry name" value="P-loop_NTPase"/>
</dbReference>
<dbReference type="NCBIfam" id="TIGR00017">
    <property type="entry name" value="cmk"/>
    <property type="match status" value="1"/>
</dbReference>
<dbReference type="PANTHER" id="PTHR21299:SF2">
    <property type="entry name" value="CYTIDYLATE KINASE"/>
    <property type="match status" value="1"/>
</dbReference>
<dbReference type="PANTHER" id="PTHR21299">
    <property type="entry name" value="CYTIDYLATE KINASE/PANTOATE-BETA-ALANINE LIGASE"/>
    <property type="match status" value="1"/>
</dbReference>
<dbReference type="Pfam" id="PF02224">
    <property type="entry name" value="Cytidylate_kin"/>
    <property type="match status" value="1"/>
</dbReference>
<dbReference type="SUPFAM" id="SSF52540">
    <property type="entry name" value="P-loop containing nucleoside triphosphate hydrolases"/>
    <property type="match status" value="1"/>
</dbReference>